<keyword id="KW-0119">Carbohydrate metabolism</keyword>
<keyword id="KW-0963">Cytoplasm</keyword>
<keyword id="KW-0299">Galactose metabolism</keyword>
<keyword id="KW-0328">Glycosyltransferase</keyword>
<keyword id="KW-0464">Manganese</keyword>
<keyword id="KW-0479">Metal-binding</keyword>
<keyword id="KW-1185">Reference proteome</keyword>
<keyword id="KW-0808">Transferase</keyword>
<evidence type="ECO:0000250" key="1"/>
<evidence type="ECO:0000269" key="2">
    <source>
    </source>
</evidence>
<evidence type="ECO:0000305" key="3"/>
<feature type="chain" id="PRO_0000418653" description="Galactinol synthase 1">
    <location>
        <begin position="1"/>
        <end position="318"/>
    </location>
</feature>
<feature type="active site" evidence="1">
    <location>
        <position position="102"/>
    </location>
</feature>
<feature type="binding site" evidence="1">
    <location>
        <position position="118"/>
    </location>
    <ligand>
        <name>Mn(2+)</name>
        <dbReference type="ChEBI" id="CHEBI:29035"/>
    </ligand>
</feature>
<feature type="binding site" evidence="1">
    <location>
        <position position="120"/>
    </location>
    <ligand>
        <name>Mn(2+)</name>
        <dbReference type="ChEBI" id="CHEBI:29035"/>
    </ligand>
</feature>
<feature type="binding site" evidence="1">
    <location>
        <position position="244"/>
    </location>
    <ligand>
        <name>Mn(2+)</name>
        <dbReference type="ChEBI" id="CHEBI:29035"/>
    </ligand>
</feature>
<reference key="1">
    <citation type="journal article" date="2003" name="Plant Physiol.">
        <title>Expression of a GALACTINOL SYNTHASE gene in tomato seeds is up-regulated before maturation desiccation and again after imbibition whenever radicle protrusion is prevented.</title>
        <authorList>
            <person name="Downie B."/>
            <person name="Gurusinghe S."/>
            <person name="Dahal P."/>
            <person name="Thacker R.R."/>
            <person name="Snyder J.C."/>
            <person name="Nonogaki H."/>
            <person name="Yim K."/>
            <person name="Fukanaga K."/>
            <person name="Alvarado V."/>
            <person name="Bradford K.J."/>
        </authorList>
    </citation>
    <scope>NUCLEOTIDE SEQUENCE [GENOMIC DNA / MRNA]</scope>
    <scope>FUNCTION</scope>
    <scope>DEVELOPMENTAL STAGE</scope>
    <scope>TISSUE SPECIFICITY</scope>
    <scope>INDUCTION</scope>
    <source>
        <strain>cv. Moneymaker</strain>
    </source>
</reference>
<organism>
    <name type="scientific">Solanum lycopersicum</name>
    <name type="common">Tomato</name>
    <name type="synonym">Lycopersicon esculentum</name>
    <dbReference type="NCBI Taxonomy" id="4081"/>
    <lineage>
        <taxon>Eukaryota</taxon>
        <taxon>Viridiplantae</taxon>
        <taxon>Streptophyta</taxon>
        <taxon>Embryophyta</taxon>
        <taxon>Tracheophyta</taxon>
        <taxon>Spermatophyta</taxon>
        <taxon>Magnoliopsida</taxon>
        <taxon>eudicotyledons</taxon>
        <taxon>Gunneridae</taxon>
        <taxon>Pentapetalae</taxon>
        <taxon>asterids</taxon>
        <taxon>lamiids</taxon>
        <taxon>Solanales</taxon>
        <taxon>Solanaceae</taxon>
        <taxon>Solanoideae</taxon>
        <taxon>Solaneae</taxon>
        <taxon>Solanum</taxon>
        <taxon>Solanum subgen. Lycopersicon</taxon>
    </lineage>
</organism>
<sequence length="318" mass="36402">MAPEFESGTKMATTIQKSSCAYVTFLAGNGDYVKGVVGLAKGLIKAKSMYPLVVAILPDVPEEHRMILTRHGCIVKEIEPLAPSLQSLDKYARSYYVLNYSKLRIWEFVEYSKMVYLDGDMQVFENIDHLFELPDKYLYAVADCICDMYGEPCDEVLPWPKELGPRPSVYFNAGMFVFQPNPSVYVRLLNTLKVTPPTQFAEQDFLNMYFKDVYKPIPYTYNMLLAMLWRHPEKIEVNKAKAVHYCSPGAKPWKYTGKEEHMDREDIKMLVKKWWDIYNDTTLDHKAQGSTVEANRLRGAAFSDTNISALYITSPSAA</sequence>
<comment type="function">
    <text evidence="2">Galactinol synthase involved in the biosynthesis of raffinose family oligosaccharides (RFOs) that function as osmoprotectants. May promote plant stress tolerance.</text>
</comment>
<comment type="catalytic activity">
    <reaction>
        <text>myo-inositol + UDP-alpha-D-galactose = alpha-D-galactosyl-(1-&gt;3)-1D-myo-inositol + UDP + H(+)</text>
        <dbReference type="Rhea" id="RHEA:12464"/>
        <dbReference type="ChEBI" id="CHEBI:15378"/>
        <dbReference type="ChEBI" id="CHEBI:17268"/>
        <dbReference type="ChEBI" id="CHEBI:17505"/>
        <dbReference type="ChEBI" id="CHEBI:58223"/>
        <dbReference type="ChEBI" id="CHEBI:66914"/>
        <dbReference type="EC" id="2.4.1.123"/>
    </reaction>
</comment>
<comment type="cofactor">
    <cofactor evidence="1">
        <name>a divalent metal cation</name>
        <dbReference type="ChEBI" id="CHEBI:60240"/>
    </cofactor>
</comment>
<comment type="subcellular location">
    <subcellularLocation>
        <location evidence="3">Cytoplasm</location>
    </subcellularLocation>
</comment>
<comment type="tissue specificity">
    <text evidence="2">Expressed in seeds, mostly in radicle tips.</text>
</comment>
<comment type="developmental stage">
    <text evidence="2">Accumulates in developing seeds during dry weight deposition and desiccation tolerance acquisition. Disappears after germination.</text>
</comment>
<comment type="induction">
    <text evidence="2">Declines within 8 hours of imbibition in a gibberellin-dependent manner. Induced by dehydration but not by cold in germinating seeds, and induced by both dehydration and cold in leaves.</text>
</comment>
<comment type="similarity">
    <text evidence="3">Belongs to the glycosyltransferase 8 family. Galactosyltransferase subfamily.</text>
</comment>
<gene>
    <name type="primary">GOLS1</name>
</gene>
<protein>
    <recommendedName>
        <fullName>Galactinol synthase 1</fullName>
        <shortName>GolS-1</shortName>
        <shortName>SlGolS1</shortName>
        <ecNumber>2.4.1.123</ecNumber>
    </recommendedName>
</protein>
<dbReference type="EC" id="2.4.1.123"/>
<dbReference type="EMBL" id="AF311943">
    <property type="protein sequence ID" value="AAL26804.1"/>
    <property type="molecule type" value="mRNA"/>
</dbReference>
<dbReference type="EMBL" id="AF447452">
    <property type="protein sequence ID" value="AAO72744.1"/>
    <property type="molecule type" value="Genomic_DNA"/>
</dbReference>
<dbReference type="RefSeq" id="NP_001234486.2">
    <property type="nucleotide sequence ID" value="NM_001247557.2"/>
</dbReference>
<dbReference type="SMR" id="Q947G8"/>
<dbReference type="STRING" id="4081.Q947G8"/>
<dbReference type="CAZy" id="GT8">
    <property type="family name" value="Glycosyltransferase Family 8"/>
</dbReference>
<dbReference type="PaxDb" id="4081-Solyc01g100830.1.1"/>
<dbReference type="GeneID" id="544174"/>
<dbReference type="KEGG" id="sly:544174"/>
<dbReference type="eggNOG" id="KOG1950">
    <property type="taxonomic scope" value="Eukaryota"/>
</dbReference>
<dbReference type="InParanoid" id="Q947G8"/>
<dbReference type="OrthoDB" id="2014201at2759"/>
<dbReference type="BRENDA" id="2.4.1.123">
    <property type="organism ID" value="3101"/>
</dbReference>
<dbReference type="Proteomes" id="UP000004994">
    <property type="component" value="Unplaced"/>
</dbReference>
<dbReference type="GO" id="GO:0005737">
    <property type="term" value="C:cytoplasm"/>
    <property type="evidence" value="ECO:0007669"/>
    <property type="project" value="UniProtKB-SubCell"/>
</dbReference>
<dbReference type="GO" id="GO:0016757">
    <property type="term" value="F:glycosyltransferase activity"/>
    <property type="evidence" value="ECO:0000318"/>
    <property type="project" value="GO_Central"/>
</dbReference>
<dbReference type="GO" id="GO:0047216">
    <property type="term" value="F:inositol 3-alpha-galactosyltransferase activity"/>
    <property type="evidence" value="ECO:0007669"/>
    <property type="project" value="UniProtKB-EC"/>
</dbReference>
<dbReference type="GO" id="GO:0046872">
    <property type="term" value="F:metal ion binding"/>
    <property type="evidence" value="ECO:0007669"/>
    <property type="project" value="UniProtKB-KW"/>
</dbReference>
<dbReference type="GO" id="GO:0070417">
    <property type="term" value="P:cellular response to cold"/>
    <property type="evidence" value="ECO:0000270"/>
    <property type="project" value="UniProtKB"/>
</dbReference>
<dbReference type="GO" id="GO:0071465">
    <property type="term" value="P:cellular response to desiccation"/>
    <property type="evidence" value="ECO:0000270"/>
    <property type="project" value="UniProtKB"/>
</dbReference>
<dbReference type="GO" id="GO:0006012">
    <property type="term" value="P:galactose metabolic process"/>
    <property type="evidence" value="ECO:0007669"/>
    <property type="project" value="UniProtKB-KW"/>
</dbReference>
<dbReference type="CDD" id="cd02537">
    <property type="entry name" value="GT8_Glycogenin"/>
    <property type="match status" value="1"/>
</dbReference>
<dbReference type="FunFam" id="3.90.550.10:FF:000049">
    <property type="entry name" value="Hexosyltransferase"/>
    <property type="match status" value="1"/>
</dbReference>
<dbReference type="Gene3D" id="3.90.550.10">
    <property type="entry name" value="Spore Coat Polysaccharide Biosynthesis Protein SpsA, Chain A"/>
    <property type="match status" value="1"/>
</dbReference>
<dbReference type="InterPro" id="IPR002495">
    <property type="entry name" value="Glyco_trans_8"/>
</dbReference>
<dbReference type="InterPro" id="IPR050587">
    <property type="entry name" value="GNT1/Glycosyltrans_8"/>
</dbReference>
<dbReference type="InterPro" id="IPR029044">
    <property type="entry name" value="Nucleotide-diphossugar_trans"/>
</dbReference>
<dbReference type="PANTHER" id="PTHR11183">
    <property type="entry name" value="GLYCOGENIN SUBFAMILY MEMBER"/>
    <property type="match status" value="1"/>
</dbReference>
<dbReference type="Pfam" id="PF01501">
    <property type="entry name" value="Glyco_transf_8"/>
    <property type="match status" value="1"/>
</dbReference>
<dbReference type="SUPFAM" id="SSF53448">
    <property type="entry name" value="Nucleotide-diphospho-sugar transferases"/>
    <property type="match status" value="1"/>
</dbReference>
<proteinExistence type="evidence at transcript level"/>
<name>GOLS1_SOLLC</name>
<accession>Q947G8</accession>